<organism>
    <name type="scientific">Mycoplasma pneumoniae (strain ATCC 29342 / M129 / Subtype 1)</name>
    <name type="common">Mycoplasmoides pneumoniae</name>
    <dbReference type="NCBI Taxonomy" id="272634"/>
    <lineage>
        <taxon>Bacteria</taxon>
        <taxon>Bacillati</taxon>
        <taxon>Mycoplasmatota</taxon>
        <taxon>Mycoplasmoidales</taxon>
        <taxon>Mycoplasmoidaceae</taxon>
        <taxon>Mycoplasmoides</taxon>
    </lineage>
</organism>
<name>ATPB_MYCPN</name>
<protein>
    <recommendedName>
        <fullName evidence="1">ATP synthase subunit beta</fullName>
        <ecNumber evidence="1">7.1.2.2</ecNumber>
    </recommendedName>
    <alternativeName>
        <fullName evidence="1">ATP synthase F1 sector subunit beta</fullName>
    </alternativeName>
    <alternativeName>
        <fullName evidence="1">F-ATPase subunit beta</fullName>
    </alternativeName>
</protein>
<reference key="1">
    <citation type="journal article" date="1996" name="Nucleic Acids Res.">
        <title>Sequence analysis of 56 kb from the genome of the bacterium Mycoplasma pneumoniae comprising the dnaA region, the atp operon and a cluster of ribosomal protein genes.</title>
        <authorList>
            <person name="Hilbert H."/>
            <person name="Himmelreich R."/>
            <person name="Plagens H."/>
            <person name="Herrmann R."/>
        </authorList>
    </citation>
    <scope>NUCLEOTIDE SEQUENCE [GENOMIC DNA]</scope>
    <source>
        <strain>ATCC 29342 / M129 / Subtype 1</strain>
    </source>
</reference>
<reference key="2">
    <citation type="journal article" date="1996" name="Nucleic Acids Res.">
        <title>Complete sequence analysis of the genome of the bacterium Mycoplasma pneumoniae.</title>
        <authorList>
            <person name="Himmelreich R."/>
            <person name="Hilbert H."/>
            <person name="Plagens H."/>
            <person name="Pirkl E."/>
            <person name="Li B.-C."/>
            <person name="Herrmann R."/>
        </authorList>
    </citation>
    <scope>NUCLEOTIDE SEQUENCE [LARGE SCALE GENOMIC DNA]</scope>
    <source>
        <strain>ATCC 29342 / M129 / Subtype 1</strain>
    </source>
</reference>
<evidence type="ECO:0000255" key="1">
    <source>
        <dbReference type="HAMAP-Rule" id="MF_01347"/>
    </source>
</evidence>
<accession>Q50331</accession>
<comment type="function">
    <text evidence="1">Produces ATP from ADP in the presence of a proton gradient across the membrane. The catalytic sites are hosted primarily by the beta subunits.</text>
</comment>
<comment type="catalytic activity">
    <reaction evidence="1">
        <text>ATP + H2O + 4 H(+)(in) = ADP + phosphate + 5 H(+)(out)</text>
        <dbReference type="Rhea" id="RHEA:57720"/>
        <dbReference type="ChEBI" id="CHEBI:15377"/>
        <dbReference type="ChEBI" id="CHEBI:15378"/>
        <dbReference type="ChEBI" id="CHEBI:30616"/>
        <dbReference type="ChEBI" id="CHEBI:43474"/>
        <dbReference type="ChEBI" id="CHEBI:456216"/>
        <dbReference type="EC" id="7.1.2.2"/>
    </reaction>
</comment>
<comment type="subunit">
    <text evidence="1">F-type ATPases have 2 components, CF(1) - the catalytic core - and CF(0) - the membrane proton channel. CF(1) has five subunits: alpha(3), beta(3), gamma(1), delta(1), epsilon(1). CF(0) has three main subunits: a(1), b(2) and c(9-12). The alpha and beta chains form an alternating ring which encloses part of the gamma chain. CF(1) is attached to CF(0) by a central stalk formed by the gamma and epsilon chains, while a peripheral stalk is formed by the delta and b chains.</text>
</comment>
<comment type="subcellular location">
    <subcellularLocation>
        <location evidence="1">Cell membrane</location>
        <topology evidence="1">Peripheral membrane protein</topology>
    </subcellularLocation>
</comment>
<comment type="similarity">
    <text evidence="1">Belongs to the ATPase alpha/beta chains family.</text>
</comment>
<gene>
    <name evidence="1" type="primary">atpD</name>
    <name type="ordered locus">MPN_598</name>
    <name type="ORF">MP244</name>
</gene>
<sequence>MKKENITYGKVHQVIGPVVDVIFTESSQLPRIYDCLSVKLAGEELFLEAAQLIGDDIVRCIALGPTEGLARNEKVTNYNHPIEVPVGKNVLGRMFNVLGKPIDGKEELPKKPQLPIHRKPPSFDDQSNTLEIFETGIKVIDLLTPYARGGKIGLFGGAGVGKTVLVQELIHNIAKEHSGLSVFAGVGERTREGNDLYYEMIQGGVIDKTALVFGQMNEPPGARMRVALTALTMAEYFRDHDNQDVLLFIDNIFRFTQAGSEVSALLGRMPSAVGYQPTLATEMGQLQERIASTKTGSITSVQAIYVPADDLTDPAPATTFTHLDAKTVLDRNIAALGIFPAINPLESTSRLLDPNIVGINHYKVALGVQNILQRFAELQDIIAILGIDELADEDKIIVERARRIRNFLSQPFFVAEKFSGIAGKYVPLSDTIQSFKEILDGKHDDLPEQAFFFVGTIQEAVEKAKRLKKATVEEK</sequence>
<dbReference type="EC" id="7.1.2.2" evidence="1"/>
<dbReference type="EMBL" id="U43738">
    <property type="protein sequence ID" value="AAC43659.1"/>
    <property type="molecule type" value="Genomic_DNA"/>
</dbReference>
<dbReference type="EMBL" id="U00089">
    <property type="protein sequence ID" value="AAB95892.1"/>
    <property type="molecule type" value="Genomic_DNA"/>
</dbReference>
<dbReference type="PIR" id="S62849">
    <property type="entry name" value="S62849"/>
</dbReference>
<dbReference type="RefSeq" id="NP_110287.1">
    <property type="nucleotide sequence ID" value="NC_000912.1"/>
</dbReference>
<dbReference type="RefSeq" id="WP_010874955.1">
    <property type="nucleotide sequence ID" value="NZ_OU342337.1"/>
</dbReference>
<dbReference type="SMR" id="Q50331"/>
<dbReference type="IntAct" id="Q50331">
    <property type="interactions" value="1"/>
</dbReference>
<dbReference type="STRING" id="272634.MPN_598"/>
<dbReference type="EnsemblBacteria" id="AAB95892">
    <property type="protein sequence ID" value="AAB95892"/>
    <property type="gene ID" value="MPN_598"/>
</dbReference>
<dbReference type="GeneID" id="66608717"/>
<dbReference type="KEGG" id="mpn:MPN_598"/>
<dbReference type="PATRIC" id="fig|272634.6.peg.661"/>
<dbReference type="HOGENOM" id="CLU_022398_0_2_14"/>
<dbReference type="OrthoDB" id="9801639at2"/>
<dbReference type="BioCyc" id="MetaCyc:MONOMER-539"/>
<dbReference type="BioCyc" id="MPNE272634:G1GJ3-973-MONOMER"/>
<dbReference type="Proteomes" id="UP000000808">
    <property type="component" value="Chromosome"/>
</dbReference>
<dbReference type="GO" id="GO:0005886">
    <property type="term" value="C:plasma membrane"/>
    <property type="evidence" value="ECO:0007669"/>
    <property type="project" value="UniProtKB-SubCell"/>
</dbReference>
<dbReference type="GO" id="GO:0045259">
    <property type="term" value="C:proton-transporting ATP synthase complex"/>
    <property type="evidence" value="ECO:0007669"/>
    <property type="project" value="UniProtKB-KW"/>
</dbReference>
<dbReference type="GO" id="GO:0005524">
    <property type="term" value="F:ATP binding"/>
    <property type="evidence" value="ECO:0007669"/>
    <property type="project" value="UniProtKB-UniRule"/>
</dbReference>
<dbReference type="GO" id="GO:0016887">
    <property type="term" value="F:ATP hydrolysis activity"/>
    <property type="evidence" value="ECO:0007669"/>
    <property type="project" value="InterPro"/>
</dbReference>
<dbReference type="GO" id="GO:0046933">
    <property type="term" value="F:proton-transporting ATP synthase activity, rotational mechanism"/>
    <property type="evidence" value="ECO:0007669"/>
    <property type="project" value="UniProtKB-UniRule"/>
</dbReference>
<dbReference type="CDD" id="cd18110">
    <property type="entry name" value="ATP-synt_F1_beta_C"/>
    <property type="match status" value="1"/>
</dbReference>
<dbReference type="CDD" id="cd18115">
    <property type="entry name" value="ATP-synt_F1_beta_N"/>
    <property type="match status" value="1"/>
</dbReference>
<dbReference type="CDD" id="cd01133">
    <property type="entry name" value="F1-ATPase_beta_CD"/>
    <property type="match status" value="1"/>
</dbReference>
<dbReference type="FunFam" id="1.10.1140.10:FF:000001">
    <property type="entry name" value="ATP synthase subunit beta"/>
    <property type="match status" value="1"/>
</dbReference>
<dbReference type="FunFam" id="3.40.50.300:FF:000004">
    <property type="entry name" value="ATP synthase subunit beta"/>
    <property type="match status" value="1"/>
</dbReference>
<dbReference type="Gene3D" id="2.40.10.170">
    <property type="match status" value="1"/>
</dbReference>
<dbReference type="Gene3D" id="1.10.1140.10">
    <property type="entry name" value="Bovine Mitochondrial F1-atpase, Atp Synthase Beta Chain, Chain D, domain 3"/>
    <property type="match status" value="1"/>
</dbReference>
<dbReference type="Gene3D" id="3.40.50.300">
    <property type="entry name" value="P-loop containing nucleotide triphosphate hydrolases"/>
    <property type="match status" value="1"/>
</dbReference>
<dbReference type="HAMAP" id="MF_01347">
    <property type="entry name" value="ATP_synth_beta_bact"/>
    <property type="match status" value="1"/>
</dbReference>
<dbReference type="InterPro" id="IPR003593">
    <property type="entry name" value="AAA+_ATPase"/>
</dbReference>
<dbReference type="InterPro" id="IPR055190">
    <property type="entry name" value="ATP-synt_VA_C"/>
</dbReference>
<dbReference type="InterPro" id="IPR005722">
    <property type="entry name" value="ATP_synth_F1_bsu"/>
</dbReference>
<dbReference type="InterPro" id="IPR020003">
    <property type="entry name" value="ATPase_a/bsu_AS"/>
</dbReference>
<dbReference type="InterPro" id="IPR050053">
    <property type="entry name" value="ATPase_alpha/beta_chains"/>
</dbReference>
<dbReference type="InterPro" id="IPR004100">
    <property type="entry name" value="ATPase_F1/V1/A1_a/bsu_N"/>
</dbReference>
<dbReference type="InterPro" id="IPR036121">
    <property type="entry name" value="ATPase_F1/V1/A1_a/bsu_N_sf"/>
</dbReference>
<dbReference type="InterPro" id="IPR000194">
    <property type="entry name" value="ATPase_F1/V1/A1_a/bsu_nucl-bd"/>
</dbReference>
<dbReference type="InterPro" id="IPR024034">
    <property type="entry name" value="ATPase_F1/V1_b/a_C"/>
</dbReference>
<dbReference type="InterPro" id="IPR027417">
    <property type="entry name" value="P-loop_NTPase"/>
</dbReference>
<dbReference type="NCBIfam" id="TIGR01039">
    <property type="entry name" value="atpD"/>
    <property type="match status" value="1"/>
</dbReference>
<dbReference type="PANTHER" id="PTHR15184">
    <property type="entry name" value="ATP SYNTHASE"/>
    <property type="match status" value="1"/>
</dbReference>
<dbReference type="PANTHER" id="PTHR15184:SF71">
    <property type="entry name" value="ATP SYNTHASE SUBUNIT BETA, MITOCHONDRIAL"/>
    <property type="match status" value="1"/>
</dbReference>
<dbReference type="Pfam" id="PF00006">
    <property type="entry name" value="ATP-synt_ab"/>
    <property type="match status" value="1"/>
</dbReference>
<dbReference type="Pfam" id="PF02874">
    <property type="entry name" value="ATP-synt_ab_N"/>
    <property type="match status" value="1"/>
</dbReference>
<dbReference type="Pfam" id="PF22919">
    <property type="entry name" value="ATP-synt_VA_C"/>
    <property type="match status" value="1"/>
</dbReference>
<dbReference type="SMART" id="SM00382">
    <property type="entry name" value="AAA"/>
    <property type="match status" value="1"/>
</dbReference>
<dbReference type="SUPFAM" id="SSF47917">
    <property type="entry name" value="C-terminal domain of alpha and beta subunits of F1 ATP synthase"/>
    <property type="match status" value="1"/>
</dbReference>
<dbReference type="SUPFAM" id="SSF50615">
    <property type="entry name" value="N-terminal domain of alpha and beta subunits of F1 ATP synthase"/>
    <property type="match status" value="1"/>
</dbReference>
<dbReference type="SUPFAM" id="SSF52540">
    <property type="entry name" value="P-loop containing nucleoside triphosphate hydrolases"/>
    <property type="match status" value="1"/>
</dbReference>
<dbReference type="PROSITE" id="PS00152">
    <property type="entry name" value="ATPASE_ALPHA_BETA"/>
    <property type="match status" value="1"/>
</dbReference>
<feature type="chain" id="PRO_0000144453" description="ATP synthase subunit beta">
    <location>
        <begin position="1"/>
        <end position="475"/>
    </location>
</feature>
<feature type="binding site" evidence="1">
    <location>
        <begin position="156"/>
        <end position="163"/>
    </location>
    <ligand>
        <name>ATP</name>
        <dbReference type="ChEBI" id="CHEBI:30616"/>
    </ligand>
</feature>
<keyword id="KW-0066">ATP synthesis</keyword>
<keyword id="KW-0067">ATP-binding</keyword>
<keyword id="KW-1003">Cell membrane</keyword>
<keyword id="KW-0139">CF(1)</keyword>
<keyword id="KW-0375">Hydrogen ion transport</keyword>
<keyword id="KW-0406">Ion transport</keyword>
<keyword id="KW-0472">Membrane</keyword>
<keyword id="KW-0547">Nucleotide-binding</keyword>
<keyword id="KW-1185">Reference proteome</keyword>
<keyword id="KW-1278">Translocase</keyword>
<keyword id="KW-0813">Transport</keyword>
<proteinExistence type="inferred from homology"/>